<sequence>MDFALLPPEVNSARMYTGPGAGSLLAAAGGWDSLAAELATTAEAYGSVLSGLAALHWRGPAAESMAVTAAPYIGWLYTTAEKTQQTAIQARAAALAFEQAYAMTLPPPVVAANRIQLLALIATNFFGQNTAAIAATEAQYAEMWAQDAAAMYGYATASAAAALLTPFSPPRQTTNPAGLTAQAAAVSQATDPLSLLIETVTQALQALTIPSFIPEDFTFLDAIFAGYATVGVTQDVESFVAGTIGAESNLGLLNVGDENPAEVTPGDFGIGELVSATSPGGGVSASGAGGAASVGNTVLASVGRANSIGQLSVPPSWAAPSTRPVSALSPAGLTTLPGTDVAEHGMPGVPGVPVAAGRASGVLPRYGVRLTVMAHPPAAG</sequence>
<dbReference type="EMBL" id="AL123456">
    <property type="protein sequence ID" value="CCP45946.1"/>
    <property type="molecule type" value="Genomic_DNA"/>
</dbReference>
<dbReference type="PIR" id="A70646">
    <property type="entry name" value="A70646"/>
</dbReference>
<dbReference type="RefSeq" id="WP_003416381.1">
    <property type="nucleotide sequence ID" value="NZ_NVQJ01000019.1"/>
</dbReference>
<dbReference type="RefSeq" id="YP_177935.1">
    <property type="nucleotide sequence ID" value="NC_000962.3"/>
</dbReference>
<dbReference type="SMR" id="P9WHY3"/>
<dbReference type="STRING" id="83332.Rv3136"/>
<dbReference type="TCDB" id="1.B.94.1.1">
    <property type="family name" value="the pro-pro-glu outer membrane porin (ppe) family"/>
</dbReference>
<dbReference type="iPTMnet" id="P9WHY3"/>
<dbReference type="PaxDb" id="83332-Rv3136"/>
<dbReference type="DNASU" id="888835"/>
<dbReference type="GeneID" id="888835"/>
<dbReference type="KEGG" id="mtu:Rv3136"/>
<dbReference type="KEGG" id="mtv:RVBD_3136"/>
<dbReference type="TubercuList" id="Rv3136"/>
<dbReference type="eggNOG" id="COG5651">
    <property type="taxonomic scope" value="Bacteria"/>
</dbReference>
<dbReference type="InParanoid" id="P9WHY3"/>
<dbReference type="OrthoDB" id="4701106at2"/>
<dbReference type="PhylomeDB" id="P9WHY3"/>
<dbReference type="Proteomes" id="UP000001584">
    <property type="component" value="Chromosome"/>
</dbReference>
<dbReference type="GO" id="GO:0009279">
    <property type="term" value="C:cell outer membrane"/>
    <property type="evidence" value="ECO:0000314"/>
    <property type="project" value="UniProtKB"/>
</dbReference>
<dbReference type="GO" id="GO:0009274">
    <property type="term" value="C:peptidoglycan-based cell wall"/>
    <property type="evidence" value="ECO:0007005"/>
    <property type="project" value="MTBBASE"/>
</dbReference>
<dbReference type="GO" id="GO:0015267">
    <property type="term" value="F:channel activity"/>
    <property type="evidence" value="ECO:0000315"/>
    <property type="project" value="UniProtKB"/>
</dbReference>
<dbReference type="GO" id="GO:0055056">
    <property type="term" value="F:D-glucose transmembrane transporter activity"/>
    <property type="evidence" value="ECO:0000315"/>
    <property type="project" value="UniProtKB"/>
</dbReference>
<dbReference type="GO" id="GO:0015254">
    <property type="term" value="F:glycerol channel activity"/>
    <property type="evidence" value="ECO:0000315"/>
    <property type="project" value="UniProtKB"/>
</dbReference>
<dbReference type="GO" id="GO:0015168">
    <property type="term" value="F:glycerol transmembrane transporter activity"/>
    <property type="evidence" value="ECO:0000315"/>
    <property type="project" value="UniProtKB"/>
</dbReference>
<dbReference type="GO" id="GO:0015155">
    <property type="term" value="F:lactose transmembrane transporter activity"/>
    <property type="evidence" value="ECO:0000315"/>
    <property type="project" value="UniProtKB"/>
</dbReference>
<dbReference type="GO" id="GO:0015574">
    <property type="term" value="F:trehalose transmembrane transporter activity"/>
    <property type="evidence" value="ECO:0000315"/>
    <property type="project" value="UniProtKB"/>
</dbReference>
<dbReference type="GO" id="GO:0071466">
    <property type="term" value="P:cellular response to xenobiotic stimulus"/>
    <property type="evidence" value="ECO:0000315"/>
    <property type="project" value="UniProtKB"/>
</dbReference>
<dbReference type="GO" id="GO:1904659">
    <property type="term" value="P:D-glucose transmembrane transport"/>
    <property type="evidence" value="ECO:0000315"/>
    <property type="project" value="UniProtKB"/>
</dbReference>
<dbReference type="GO" id="GO:0015793">
    <property type="term" value="P:glycerol transmembrane transport"/>
    <property type="evidence" value="ECO:0000315"/>
    <property type="project" value="UniProtKB"/>
</dbReference>
<dbReference type="GO" id="GO:0015767">
    <property type="term" value="P:lactose transport"/>
    <property type="evidence" value="ECO:0000315"/>
    <property type="project" value="UniProtKB"/>
</dbReference>
<dbReference type="GO" id="GO:1904981">
    <property type="term" value="P:maltose transmembrane transport"/>
    <property type="evidence" value="ECO:0000315"/>
    <property type="project" value="UniProtKB"/>
</dbReference>
<dbReference type="GO" id="GO:0035821">
    <property type="term" value="P:modulation of process of another organism"/>
    <property type="evidence" value="ECO:0000315"/>
    <property type="project" value="UniProtKB"/>
</dbReference>
<dbReference type="GO" id="GO:0052572">
    <property type="term" value="P:response to host immune response"/>
    <property type="evidence" value="ECO:0000318"/>
    <property type="project" value="GO_Central"/>
</dbReference>
<dbReference type="GO" id="GO:0042594">
    <property type="term" value="P:response to starvation"/>
    <property type="evidence" value="ECO:0000315"/>
    <property type="project" value="UniProtKB"/>
</dbReference>
<dbReference type="GO" id="GO:0042783">
    <property type="term" value="P:symbiont-mediated evasion of host immune response"/>
    <property type="evidence" value="ECO:0000315"/>
    <property type="project" value="UniProtKB"/>
</dbReference>
<dbReference type="GO" id="GO:0140321">
    <property type="term" value="P:symbiont-mediated suppression of host autophagy"/>
    <property type="evidence" value="ECO:0000315"/>
    <property type="project" value="UniProtKB"/>
</dbReference>
<dbReference type="GO" id="GO:0015771">
    <property type="term" value="P:trehalose transport"/>
    <property type="evidence" value="ECO:0000315"/>
    <property type="project" value="UniProtKB"/>
</dbReference>
<dbReference type="FunFam" id="1.20.1260.20:FF:000001">
    <property type="entry name" value="PPE family protein PPE41"/>
    <property type="match status" value="1"/>
</dbReference>
<dbReference type="Gene3D" id="1.20.1260.20">
    <property type="entry name" value="PPE superfamily"/>
    <property type="match status" value="1"/>
</dbReference>
<dbReference type="InterPro" id="IPR022171">
    <property type="entry name" value="PPE_C"/>
</dbReference>
<dbReference type="InterPro" id="IPR000030">
    <property type="entry name" value="PPE_dom"/>
</dbReference>
<dbReference type="InterPro" id="IPR038332">
    <property type="entry name" value="PPE_sf"/>
</dbReference>
<dbReference type="PANTHER" id="PTHR46766">
    <property type="entry name" value="GLUTAMINE-RICH PROTEIN 2"/>
    <property type="match status" value="1"/>
</dbReference>
<dbReference type="PANTHER" id="PTHR46766:SF1">
    <property type="entry name" value="GLUTAMINE-RICH PROTEIN 2"/>
    <property type="match status" value="1"/>
</dbReference>
<dbReference type="Pfam" id="PF00823">
    <property type="entry name" value="PPE"/>
    <property type="match status" value="1"/>
</dbReference>
<dbReference type="Pfam" id="PF12484">
    <property type="entry name" value="PPE-SVP"/>
    <property type="match status" value="1"/>
</dbReference>
<dbReference type="SUPFAM" id="SSF140459">
    <property type="entry name" value="PE/PPE dimer-like"/>
    <property type="match status" value="1"/>
</dbReference>
<proteinExistence type="evidence at protein level"/>
<gene>
    <name evidence="7" type="primary">PPE51</name>
    <name evidence="7" type="ordered locus">Rv3136</name>
</gene>
<accession>P9WHY3</accession>
<accession>L0TD92</accession>
<accession>Q6MX06</accession>
<accession>Q7D623</accession>
<reference key="1">
    <citation type="journal article" date="1998" name="Nature">
        <title>Deciphering the biology of Mycobacterium tuberculosis from the complete genome sequence.</title>
        <authorList>
            <person name="Cole S.T."/>
            <person name="Brosch R."/>
            <person name="Parkhill J."/>
            <person name="Garnier T."/>
            <person name="Churcher C.M."/>
            <person name="Harris D.E."/>
            <person name="Gordon S.V."/>
            <person name="Eiglmeier K."/>
            <person name="Gas S."/>
            <person name="Barry C.E. III"/>
            <person name="Tekaia F."/>
            <person name="Badcock K."/>
            <person name="Basham D."/>
            <person name="Brown D."/>
            <person name="Chillingworth T."/>
            <person name="Connor R."/>
            <person name="Davies R.M."/>
            <person name="Devlin K."/>
            <person name="Feltwell T."/>
            <person name="Gentles S."/>
            <person name="Hamlin N."/>
            <person name="Holroyd S."/>
            <person name="Hornsby T."/>
            <person name="Jagels K."/>
            <person name="Krogh A."/>
            <person name="McLean J."/>
            <person name="Moule S."/>
            <person name="Murphy L.D."/>
            <person name="Oliver S."/>
            <person name="Osborne J."/>
            <person name="Quail M.A."/>
            <person name="Rajandream M.A."/>
            <person name="Rogers J."/>
            <person name="Rutter S."/>
            <person name="Seeger K."/>
            <person name="Skelton S."/>
            <person name="Squares S."/>
            <person name="Squares R."/>
            <person name="Sulston J.E."/>
            <person name="Taylor K."/>
            <person name="Whitehead S."/>
            <person name="Barrell B.G."/>
        </authorList>
    </citation>
    <scope>NUCLEOTIDE SEQUENCE [LARGE SCALE GENOMIC DNA]</scope>
    <source>
        <strain>ATCC 25618 / H37Rv</strain>
    </source>
</reference>
<reference key="2">
    <citation type="journal article" date="2011" name="Mol. Cell. Proteomics">
        <title>Proteogenomic analysis of Mycobacterium tuberculosis by high resolution mass spectrometry.</title>
        <authorList>
            <person name="Kelkar D.S."/>
            <person name="Kumar D."/>
            <person name="Kumar P."/>
            <person name="Balakrishnan L."/>
            <person name="Muthusamy B."/>
            <person name="Yadav A.K."/>
            <person name="Shrivastava P."/>
            <person name="Marimuthu A."/>
            <person name="Anand S."/>
            <person name="Sundaram H."/>
            <person name="Kingsbury R."/>
            <person name="Harsha H.C."/>
            <person name="Nair B."/>
            <person name="Prasad T.S."/>
            <person name="Chauhan D.S."/>
            <person name="Katoch K."/>
            <person name="Katoch V.M."/>
            <person name="Kumar P."/>
            <person name="Chaerkady R."/>
            <person name="Ramachandran S."/>
            <person name="Dash D."/>
            <person name="Pandey A."/>
        </authorList>
    </citation>
    <scope>ACETYLATION [LARGE SCALE ANALYSIS] AT MET-1</scope>
    <scope>IDENTIFICATION BY MASS SPECTROMETRY [LARGE SCALE ANALYSIS]</scope>
    <source>
        <strain>ATCC 25618 / H37Rv</strain>
    </source>
</reference>
<reference key="3">
    <citation type="journal article" date="2020" name="Cells">
        <title>PPE51 Is Involved in the Uptake of Disaccharides by Mycobacterium tuberculosis.</title>
        <authorList>
            <person name="Korycka-Machala M."/>
            <person name="Pawelczyk J."/>
            <person name="Borowka P."/>
            <person name="Dziadek B."/>
            <person name="Brzostek A."/>
            <person name="Kawka M."/>
            <person name="Bekier A."/>
            <person name="Rykowski S."/>
            <person name="Olejniczak A.B."/>
            <person name="Strapagiel D."/>
            <person name="Witczak Z."/>
            <person name="Dziadek J."/>
        </authorList>
    </citation>
    <scope>FUNCTION</scope>
    <scope>INDUCTION</scope>
    <scope>DISRUPTION PHENOTYPE</scope>
    <scope>MUTAGENESIS OF THR-83; LEU-95 AND ALA-96</scope>
    <source>
        <strain evidence="5">ATCC 25618 / H37Rv</strain>
    </source>
</reference>
<reference key="4">
    <citation type="journal article" date="2020" name="Science">
        <title>PE/PPE proteins mediate nutrient transport across the outer membrane of Mycobacterium tuberculosis.</title>
        <authorList>
            <person name="Wang Q."/>
            <person name="Boshoff H.I.M."/>
            <person name="Harrison J.R."/>
            <person name="Ray P.C."/>
            <person name="Green S.R."/>
            <person name="Wyatt P.G."/>
            <person name="Barry C.E. III"/>
        </authorList>
    </citation>
    <scope>FUNCTION</scope>
    <scope>INTERACTION WITH PE19 AND PE25</scope>
    <scope>SUBCELLULAR LOCATION</scope>
    <scope>DISRUPTION PHENOTYPE</scope>
    <scope>MUTAGENESIS OF GLY-18; MET-65; ALA-87; ALA-90 AND ASP-147</scope>
    <scope>3D-STRUCTURE MODELING OF 1-176 IN COMPLEX WITH PE19</scope>
    <source>
        <strain evidence="6">ATCC 27294 / TMC 102 / H37Rv</strain>
    </source>
</reference>
<reference key="5">
    <citation type="journal article" date="2022" name="MBio">
        <title>Mycobacterium tuberculosis PPE51 Inhibits Autophagy by Suppressing Toll-Like Receptor 2-Dependent Signaling.</title>
        <authorList>
            <person name="Strong E.J."/>
            <person name="Wang J."/>
            <person name="Ng T.W."/>
            <person name="Porcelli S.A."/>
            <person name="Lee S."/>
        </authorList>
    </citation>
    <scope>FUNCTION</scope>
    <scope>DISRUPTION PHENOTYPE</scope>
    <source>
        <strain evidence="8">H37Rv</strain>
    </source>
</reference>
<reference key="6">
    <citation type="journal article" date="2022" name="Sci. Rep.">
        <title>PPE51 mediates uptake of trehalose across the mycomembrane of Mycobacterium tuberculosis.</title>
        <authorList>
            <person name="Babu Sait M.R."/>
            <person name="Koliwer-Brandl H."/>
            <person name="Stewart J.A."/>
            <person name="Swarts B.M."/>
            <person name="Jacobsen M."/>
            <person name="Ioerger T.R."/>
            <person name="Kalscheuer R."/>
        </authorList>
    </citation>
    <scope>FUNCTION</scope>
    <scope>SUBCELLULAR LOCATION</scope>
    <scope>DISRUPTION PHENOTYPE</scope>
    <scope>MUTAGENESIS OF ARG-14; ALA-94 AND LEU-204</scope>
    <source>
        <strain evidence="7">ATCC 25618 / H37Rv</strain>
    </source>
</reference>
<organism>
    <name type="scientific">Mycobacterium tuberculosis (strain ATCC 25618 / H37Rv)</name>
    <dbReference type="NCBI Taxonomy" id="83332"/>
    <lineage>
        <taxon>Bacteria</taxon>
        <taxon>Bacillati</taxon>
        <taxon>Actinomycetota</taxon>
        <taxon>Actinomycetes</taxon>
        <taxon>Mycobacteriales</taxon>
        <taxon>Mycobacteriaceae</taxon>
        <taxon>Mycobacterium</taxon>
        <taxon>Mycobacterium tuberculosis complex</taxon>
    </lineage>
</organism>
<comment type="function">
    <text evidence="1 2 3">Small molecule-selective channel required for the uptake of nutrients across the outer mycomembrane (PubMed:32138343, PubMed:32139546). Transports glycerol and glucose. Involved in sensitivity to M.tuberculosis growth inhibitory agrichemical 3,3-bis-di(methylsulfonyl)propionamide (3bMP1) (PubMed:32139546). Transports maltose and lactose disaccharides. Involved in sensitivity to bactericidal thio-disaccharide T-6 compound (1,6-anhydro-3-deoxy-4-S-(2,3,4,6-tetra-O-acetyl-beta-D-glucopyranosyl)-D-glycero-hexopyranos-2-ulose) (PubMed:32138343). Transports extracellular trehalose, a component of the cell envelope, and trehalose analog, 6-azido trehalose (6-TreAz), which has antimycobacterial activity (PubMed:35136132).</text>
</comment>
<comment type="function">
    <text evidence="4">Plays a role in response to starvation and stress, likely environment within the host. Inhibits canonical autophagy in infected mouse RAW264.7 macrophages. Inhibits autophagy and enhances intracellular bacterial survival when expressed in human macrophage-like THP-1 cells. Inhibits Toll-like receptor 2 (TLR2)-dependent signaling leading to autophagy inhibition, increased intracellular bacterial survival, reduced phagocytosis and reduced secretion of interleukin 6 (IL-6) and IL-1 in infected mouse primary bone marrow-derived macrophage (BMDM) cells. Required for virulence and persistence in the lungs and spleens of intranasally infected C57BL/6J mice. Blocks the antibacterial effects of TLR2 activation, suppresses MHC class II-dependent antigen presentation, and reduces IFN-gamma and TNF-alpha-producing CD4(+) T cells during infection in C57BL/6J mice.</text>
</comment>
<comment type="subunit">
    <text evidence="2">Interacts with PE19 and PE25.</text>
</comment>
<comment type="subcellular location">
    <subcellularLocation>
        <location evidence="2 10">Cell outer membrane</location>
    </subcellularLocation>
</comment>
<comment type="induction">
    <text evidence="1">By glycerol supplementation as the sole carbon source in the minimal growth medium.</text>
</comment>
<comment type="disruption phenotype">
    <text evidence="1 2 3 4">Unable to grow on minimal medium with trehalose or glucose as the sole carbon sources or in limited medium containing trehalose (PubMed:35136132). Resistant to trehalose analog 6-TreAz (PubMed:35136132). Slow growth on minimal medium supplemented with maltose or lactose as the sole carbon and energy sources at both neutral pH and acidic pH 5.7 (PubMed:32138343). The supplementation of glycerol or glucose promotes growth at acidic pH, but reduces growth significantly at neutral pH in minimal medium and on solid agar (PubMed:32138343, PubMed:32139546, PubMed:35136132, PubMed:35467412). Mutants grow normally in rich medium at either neutral or acidic pH, and in media containing oleic acid or hexanamide as the sole carbon sources (PubMed:32138343, PubMed:32139546, PubMed:35467412). Cell envelope-associated glycolipid phthiocerol dimycocerosate (PDIM)-positive mutants are resistant to 3bMP1 compound (PubMed:32139546). Deletion mutant-infected mouse RAW264.7 macrophages have increased canonical autophagy and decreased intracellular bacterial burden 24 hours postinfection (PubMed:35467412). They have significantly higher reactive oxygen species (ROS) levels and increased MAP kinase Erk1/2 phosphorylation compared to macrophages infected with wild-type bacteria, but no increase in JNK mitogen-activated protein kinase (MAPK) or p38 MAPK expression or phosphorylation (PubMed:35467412). Primary murine bone marrow-derived macrophages (BMDMs) and dendritic cells (BMDDCs) have improved internalization of the deletion mutant, increased autophagy and reduced intracellular survival of the mutant during infection, compared to infection with wild-type (PubMed:35467412). Mutant-infected primary murine BMDMs secrete increased interleukin 6 (IL-6) and IL-1, and accumulate ROS (PubMed:35467412). These effects are not seen in mutant-infected BMDMs of the TLR2-deficient (tlr2(-/-)) mice (PubMed:35467412). Deletion mutant-infected human macrophage-like THP-1 cells have increased induction of autophagy and reduced intracellular bacterial burden compared to THP-1 cells infected with the wild-type (PubMed:35467412). At 72 hours postinfection, significantly more necrotic cell deaths occur in the mutant-infected THP-1 cells (PubMed:35467412). Significantly attenuated infection in lungs and spleens by deletion mutant delivered to the lungs of C57BL/6J mice by intranasal inoculation, but no attenuation in TLR2-deficient mice (PubMed:35467412). Increased autophagy in lungs, enhanced MHC class II antigen presentation and recognition, and significantly increased IFN-gamma and TNF-alpha-producing CD4(+) T cells in spleen, in response to tubercular antigens compared with wild-type in mutant-infected C57BL/6J mice (PubMed:35467412).</text>
</comment>
<comment type="similarity">
    <text evidence="9">Belongs to the mycobacterial PPE family.</text>
</comment>
<protein>
    <recommendedName>
        <fullName evidence="7">Transporter PPE51</fullName>
    </recommendedName>
    <alternativeName>
        <fullName evidence="6 7">Proline-proline-glutamate family protein 51</fullName>
        <shortName evidence="6 7">PPE family protein 51</shortName>
    </alternativeName>
    <alternativeName>
        <fullName evidence="8">Protein PPE51</fullName>
    </alternativeName>
</protein>
<name>PPE51_MYCTU</name>
<feature type="chain" id="PRO_0000378485" description="Transporter PPE51">
    <location>
        <begin position="1"/>
        <end position="380"/>
    </location>
</feature>
<feature type="modified residue" description="N-acetylmethionine" evidence="11">
    <location>
        <position position="1"/>
    </location>
</feature>
<feature type="mutagenesis site" description="Resistant to trehalose analog 6-azido trehalose, but not to 2-azido trehalose. Normal growth on trehalose as the sole carbon source." evidence="3">
    <original>R</original>
    <variation>P</variation>
    <location>
        <position position="14"/>
    </location>
</feature>
<feature type="mutagenesis site" description="Resistant to 3bMP1 compound. Defective in uptake of propionamide, glucose and glycerol, and is unable to grow on them as the sole carbon sources, but grows normally on hexanamide." evidence="2">
    <original>G</original>
    <variation>D</variation>
    <location>
        <position position="18"/>
    </location>
</feature>
<feature type="mutagenesis site" description="Resistant to 3bMP1 compound. Defective in uptake of propionamide, glucose and glycerol, and is unable to grow on them as the sole carbon sources, but grows normally on hexanamide." evidence="2">
    <original>M</original>
    <variation>T</variation>
    <location>
        <position position="65"/>
    </location>
</feature>
<feature type="mutagenesis site" description="Resistant to thio-disaccharide T-6, but not to other thio-functionalized carbohydrate derivatives, such as aminothiadiazole T-23 or thiazoline T-26. Sensitive similarly to wild-type to antitubercular drugs including isoniazid, ethambutol, streptomycin, rifampicin and thiolactomycin." evidence="1">
    <original>T</original>
    <variation>K</variation>
    <location>
        <position position="83"/>
    </location>
</feature>
<feature type="mutagenesis site" description="Resistant to 3bMP1 compound. Defective in uptake of propionamide, glucose and glycerol, and is unable to grow on them as the sole carbon sources, but grows normally on hexanamide." evidence="2">
    <original>A</original>
    <variation>T</variation>
    <location>
        <position position="87"/>
    </location>
</feature>
<feature type="mutagenesis site" description="Resistant to 3bMP1 compound. Defective in uptake of propionamide, glucose and glycerol, and is unable to grow on them as the sole carbon sources, but grows normally on hexanamide." evidence="2">
    <original>A</original>
    <variation>D</variation>
    <location>
        <position position="90"/>
    </location>
</feature>
<feature type="mutagenesis site" description="Resistant to trehalose analog 6-azido trehalose, but not to 2-azido trehalose. Normal growth on trehalose as the sole carbon source." evidence="3">
    <original>A</original>
    <variation>T</variation>
    <location>
        <position position="94"/>
    </location>
</feature>
<feature type="mutagenesis site" description="Resistant to thio-disaccharide T-6, but not to other thio-functionalized carbohydrate derivatives, such as aminothiadiazole T-23 or thiazoline T-26. Sensitive similarly to wild-type to antitubercular drugs including isoniazid, ethambutol, streptomycin, rifampicin and thiolactomycin." evidence="1">
    <original>L</original>
    <variation>P</variation>
    <location>
        <position position="95"/>
    </location>
</feature>
<feature type="mutagenesis site" description="Resistant to thio-disaccharide T-6, but not to other thio-functionalized carbohydrate derivatives, such as aminothiadiazole T-23 or thiazoline T-26. Sensitive similarly to wild-type to antitubercular drugs including isoniazid, ethambutol, streptomycin, rifampicin and thiolactomycin. Reduced uptake of radiolabeled T-6 after its 48-hour incubation with the cell culture, but not after its shorter incubation time. Significantly slower growth compared to the wild-type on minimal medium supplemented with maltose or lactose as the sole carbon and energy sources at both neutral pH and acidic pH 5.7. Growth is promoted in acidic minimal medium by supplementation of glycerol or glucose compared to the wild-type. No effect on growth in rich medium." evidence="1">
    <original>A</original>
    <variation>S</variation>
    <location>
        <position position="96"/>
    </location>
</feature>
<feature type="mutagenesis site" description="Resistant to 3bMP1 compound. Defective in uptake of propionamide, glucose and glycerol, and is unable to grow on them as the sole carbon sources, but grows normally on hexanamide." evidence="2">
    <original>D</original>
    <variation>A</variation>
    <location>
        <position position="147"/>
    </location>
</feature>
<feature type="mutagenesis site" description="Resistant to trehalose analog 6-azido trehalose, but not to 2-azido trehalose. Normal growth on trehalose as the sole carbon source." evidence="3">
    <original>L</original>
    <variation>P</variation>
    <location>
        <position position="204"/>
    </location>
</feature>
<keyword id="KW-0007">Acetylation</keyword>
<keyword id="KW-0998">Cell outer membrane</keyword>
<keyword id="KW-0472">Membrane</keyword>
<keyword id="KW-1185">Reference proteome</keyword>
<keyword id="KW-0813">Transport</keyword>
<keyword id="KW-0843">Virulence</keyword>
<evidence type="ECO:0000269" key="1">
    <source>
    </source>
</evidence>
<evidence type="ECO:0000269" key="2">
    <source>
    </source>
</evidence>
<evidence type="ECO:0000269" key="3">
    <source>
    </source>
</evidence>
<evidence type="ECO:0000269" key="4">
    <source>
    </source>
</evidence>
<evidence type="ECO:0000303" key="5">
    <source>
    </source>
</evidence>
<evidence type="ECO:0000303" key="6">
    <source>
    </source>
</evidence>
<evidence type="ECO:0000303" key="7">
    <source>
    </source>
</evidence>
<evidence type="ECO:0000303" key="8">
    <source>
    </source>
</evidence>
<evidence type="ECO:0000305" key="9"/>
<evidence type="ECO:0000305" key="10">
    <source>
    </source>
</evidence>
<evidence type="ECO:0007744" key="11">
    <source>
    </source>
</evidence>